<protein>
    <recommendedName>
        <fullName evidence="1">tRNA uridine 5-carboxymethylaminomethyl modification enzyme MnmG</fullName>
    </recommendedName>
    <alternativeName>
        <fullName evidence="1">Glucose-inhibited division protein A</fullName>
    </alternativeName>
</protein>
<keyword id="KW-0963">Cytoplasm</keyword>
<keyword id="KW-0274">FAD</keyword>
<keyword id="KW-0285">Flavoprotein</keyword>
<keyword id="KW-0520">NAD</keyword>
<keyword id="KW-0819">tRNA processing</keyword>
<name>MNMG_STRA3</name>
<gene>
    <name evidence="1" type="primary">mnmG</name>
    <name evidence="1" type="synonym">gidA</name>
    <name type="ordered locus">gbs2101</name>
</gene>
<comment type="function">
    <text evidence="1">NAD-binding protein involved in the addition of a carboxymethylaminomethyl (cmnm) group at the wobble position (U34) of certain tRNAs, forming tRNA-cmnm(5)s(2)U34.</text>
</comment>
<comment type="cofactor">
    <cofactor evidence="1">
        <name>FAD</name>
        <dbReference type="ChEBI" id="CHEBI:57692"/>
    </cofactor>
</comment>
<comment type="subunit">
    <text evidence="1">Homodimer. Heterotetramer of two MnmE and two MnmG subunits.</text>
</comment>
<comment type="subcellular location">
    <subcellularLocation>
        <location evidence="1">Cytoplasm</location>
    </subcellularLocation>
</comment>
<comment type="similarity">
    <text evidence="1">Belongs to the MnmG family.</text>
</comment>
<reference key="1">
    <citation type="journal article" date="2002" name="Mol. Microbiol.">
        <title>Genome sequence of Streptococcus agalactiae, a pathogen causing invasive neonatal disease.</title>
        <authorList>
            <person name="Glaser P."/>
            <person name="Rusniok C."/>
            <person name="Buchrieser C."/>
            <person name="Chevalier F."/>
            <person name="Frangeul L."/>
            <person name="Msadek T."/>
            <person name="Zouine M."/>
            <person name="Couve E."/>
            <person name="Lalioui L."/>
            <person name="Poyart C."/>
            <person name="Trieu-Cuot P."/>
            <person name="Kunst F."/>
        </authorList>
    </citation>
    <scope>NUCLEOTIDE SEQUENCE [LARGE SCALE GENOMIC DNA]</scope>
    <source>
        <strain>NEM316</strain>
    </source>
</reference>
<feature type="chain" id="PRO_0000117184" description="tRNA uridine 5-carboxymethylaminomethyl modification enzyme MnmG">
    <location>
        <begin position="1"/>
        <end position="633"/>
    </location>
</feature>
<feature type="binding site" evidence="1">
    <location>
        <begin position="15"/>
        <end position="20"/>
    </location>
    <ligand>
        <name>FAD</name>
        <dbReference type="ChEBI" id="CHEBI:57692"/>
    </ligand>
</feature>
<feature type="binding site" evidence="1">
    <location>
        <position position="127"/>
    </location>
    <ligand>
        <name>FAD</name>
        <dbReference type="ChEBI" id="CHEBI:57692"/>
    </ligand>
</feature>
<feature type="binding site" evidence="1">
    <location>
        <position position="182"/>
    </location>
    <ligand>
        <name>FAD</name>
        <dbReference type="ChEBI" id="CHEBI:57692"/>
    </ligand>
</feature>
<feature type="binding site" evidence="1">
    <location>
        <begin position="276"/>
        <end position="290"/>
    </location>
    <ligand>
        <name>NAD(+)</name>
        <dbReference type="ChEBI" id="CHEBI:57540"/>
    </ligand>
</feature>
<feature type="binding site" evidence="1">
    <location>
        <position position="373"/>
    </location>
    <ligand>
        <name>FAD</name>
        <dbReference type="ChEBI" id="CHEBI:57692"/>
    </ligand>
</feature>
<sequence>MTHNFAENYDIIVVGAGHAGVEASLAASRMGCKTLLATINLEMLAFMPCNPSIGGSAKGIVVREIDALGGEMGKNIDKTYIQMKMLNTGKGPAVRALRAQADKALYAQTMKQTVEKQENLTLRQAMIDEILVEDGKVVGVRTATNQKFSAKSVVITTGTALRGEIILGDLKYSSGPNNSLASVTLADNLRDLGLEIGRFKTGTPPRVKASSINYEKTEIQPGDEQPNHFSFMSRDEDYITDQVPCWLTYTNTLSHDIINQNLHRAPMFSGIVKGVGPRYCPSIEDKIVRFADKERHQLFLEPEGRYTEEVYVQGLSTSLPEDVQVDLLRSIKGLENAEMMRTGYAIEYDIVLPHQLRATLETKVIAGLFTAGQTNGTSGYEEAAGQGLVAGINAALKVQGKPELILKRSDAYIGVMIDDLVTKGTLEPYRLLTSRAEYRLILRHDNADMRLTEIGYEIGLVDEERYAIFKKRQMQFENELERLDSIKLKPVSETNKRIQELGFKPLTDALTAKEFMRRPQITYAVATDFVGCADEPLDSKVIELLETEIKYEGYIKKALDQVAKMKRMEEKRIPPHIDWDDIDSIATEARQKFKKINPETLGQASRISGVNPADISILMVYLEGRQKGRKNIN</sequence>
<organism>
    <name type="scientific">Streptococcus agalactiae serotype III (strain NEM316)</name>
    <dbReference type="NCBI Taxonomy" id="211110"/>
    <lineage>
        <taxon>Bacteria</taxon>
        <taxon>Bacillati</taxon>
        <taxon>Bacillota</taxon>
        <taxon>Bacilli</taxon>
        <taxon>Lactobacillales</taxon>
        <taxon>Streptococcaceae</taxon>
        <taxon>Streptococcus</taxon>
    </lineage>
</organism>
<dbReference type="EMBL" id="AL766856">
    <property type="protein sequence ID" value="CAD47760.1"/>
    <property type="molecule type" value="Genomic_DNA"/>
</dbReference>
<dbReference type="RefSeq" id="WP_000149487.1">
    <property type="nucleotide sequence ID" value="NC_004368.1"/>
</dbReference>
<dbReference type="SMR" id="P0A3F0"/>
<dbReference type="GeneID" id="66886877"/>
<dbReference type="KEGG" id="san:gbs2101"/>
<dbReference type="eggNOG" id="COG0445">
    <property type="taxonomic scope" value="Bacteria"/>
</dbReference>
<dbReference type="HOGENOM" id="CLU_007831_2_2_9"/>
<dbReference type="Proteomes" id="UP000000823">
    <property type="component" value="Chromosome"/>
</dbReference>
<dbReference type="GO" id="GO:0005829">
    <property type="term" value="C:cytosol"/>
    <property type="evidence" value="ECO:0007669"/>
    <property type="project" value="TreeGrafter"/>
</dbReference>
<dbReference type="GO" id="GO:0050660">
    <property type="term" value="F:flavin adenine dinucleotide binding"/>
    <property type="evidence" value="ECO:0007669"/>
    <property type="project" value="UniProtKB-UniRule"/>
</dbReference>
<dbReference type="GO" id="GO:0030488">
    <property type="term" value="P:tRNA methylation"/>
    <property type="evidence" value="ECO:0007669"/>
    <property type="project" value="TreeGrafter"/>
</dbReference>
<dbReference type="GO" id="GO:0002098">
    <property type="term" value="P:tRNA wobble uridine modification"/>
    <property type="evidence" value="ECO:0007669"/>
    <property type="project" value="InterPro"/>
</dbReference>
<dbReference type="FunFam" id="1.10.10.1800:FF:000001">
    <property type="entry name" value="tRNA uridine 5-carboxymethylaminomethyl modification enzyme MnmG"/>
    <property type="match status" value="1"/>
</dbReference>
<dbReference type="FunFam" id="1.10.150.570:FF:000001">
    <property type="entry name" value="tRNA uridine 5-carboxymethylaminomethyl modification enzyme MnmG"/>
    <property type="match status" value="1"/>
</dbReference>
<dbReference type="FunFam" id="3.50.50.60:FF:000002">
    <property type="entry name" value="tRNA uridine 5-carboxymethylaminomethyl modification enzyme MnmG"/>
    <property type="match status" value="1"/>
</dbReference>
<dbReference type="FunFam" id="3.50.50.60:FF:000063">
    <property type="entry name" value="tRNA uridine 5-carboxymethylaminomethyl modification enzyme MnmG"/>
    <property type="match status" value="1"/>
</dbReference>
<dbReference type="Gene3D" id="3.50.50.60">
    <property type="entry name" value="FAD/NAD(P)-binding domain"/>
    <property type="match status" value="2"/>
</dbReference>
<dbReference type="Gene3D" id="1.10.150.570">
    <property type="entry name" value="GidA associated domain, C-terminal subdomain"/>
    <property type="match status" value="1"/>
</dbReference>
<dbReference type="Gene3D" id="1.10.10.1800">
    <property type="entry name" value="tRNA uridine 5-carboxymethylaminomethyl modification enzyme MnmG/GidA"/>
    <property type="match status" value="1"/>
</dbReference>
<dbReference type="HAMAP" id="MF_00129">
    <property type="entry name" value="MnmG_GidA"/>
    <property type="match status" value="1"/>
</dbReference>
<dbReference type="InterPro" id="IPR036188">
    <property type="entry name" value="FAD/NAD-bd_sf"/>
</dbReference>
<dbReference type="InterPro" id="IPR049312">
    <property type="entry name" value="GIDA_C_N"/>
</dbReference>
<dbReference type="InterPro" id="IPR004416">
    <property type="entry name" value="MnmG"/>
</dbReference>
<dbReference type="InterPro" id="IPR002218">
    <property type="entry name" value="MnmG-rel"/>
</dbReference>
<dbReference type="InterPro" id="IPR020595">
    <property type="entry name" value="MnmG-rel_CS"/>
</dbReference>
<dbReference type="InterPro" id="IPR026904">
    <property type="entry name" value="MnmG_C"/>
</dbReference>
<dbReference type="InterPro" id="IPR047001">
    <property type="entry name" value="MnmG_C_subdom"/>
</dbReference>
<dbReference type="InterPro" id="IPR044920">
    <property type="entry name" value="MnmG_C_subdom_sf"/>
</dbReference>
<dbReference type="InterPro" id="IPR040131">
    <property type="entry name" value="MnmG_N"/>
</dbReference>
<dbReference type="NCBIfam" id="TIGR00136">
    <property type="entry name" value="mnmG_gidA"/>
    <property type="match status" value="1"/>
</dbReference>
<dbReference type="PANTHER" id="PTHR11806">
    <property type="entry name" value="GLUCOSE INHIBITED DIVISION PROTEIN A"/>
    <property type="match status" value="1"/>
</dbReference>
<dbReference type="PANTHER" id="PTHR11806:SF0">
    <property type="entry name" value="PROTEIN MTO1 HOMOLOG, MITOCHONDRIAL"/>
    <property type="match status" value="1"/>
</dbReference>
<dbReference type="Pfam" id="PF01134">
    <property type="entry name" value="GIDA"/>
    <property type="match status" value="1"/>
</dbReference>
<dbReference type="Pfam" id="PF21680">
    <property type="entry name" value="GIDA_C_1st"/>
    <property type="match status" value="1"/>
</dbReference>
<dbReference type="Pfam" id="PF13932">
    <property type="entry name" value="SAM_GIDA_C"/>
    <property type="match status" value="1"/>
</dbReference>
<dbReference type="PRINTS" id="PR00411">
    <property type="entry name" value="PNDRDTASEI"/>
</dbReference>
<dbReference type="SMART" id="SM01228">
    <property type="entry name" value="GIDA_assoc_3"/>
    <property type="match status" value="1"/>
</dbReference>
<dbReference type="SUPFAM" id="SSF51905">
    <property type="entry name" value="FAD/NAD(P)-binding domain"/>
    <property type="match status" value="1"/>
</dbReference>
<dbReference type="PROSITE" id="PS01280">
    <property type="entry name" value="GIDA_1"/>
    <property type="match status" value="1"/>
</dbReference>
<dbReference type="PROSITE" id="PS01281">
    <property type="entry name" value="GIDA_2"/>
    <property type="match status" value="1"/>
</dbReference>
<evidence type="ECO:0000255" key="1">
    <source>
        <dbReference type="HAMAP-Rule" id="MF_00129"/>
    </source>
</evidence>
<proteinExistence type="inferred from homology"/>
<accession>P0A3F0</accession>
<accession>Q8DWS1</accession>
<accession>Q8E2M1</accession>